<gene>
    <name type="primary">B8</name>
</gene>
<sequence length="265" mass="30454">MIYKKVHDEQKSLFFHKFKCQWVPRLGSFLPKRVRTLKIANGATAASVFHQKVKGQWVPRLGSFLPKRVRTLKIANGATAVSVFPHKVKGQWVPRLGSFLPKRVRTLKIANWATAVSVSLHTVKGQWVPRLGSFLLKWVRTLKFANGATAVSVFSDKAKDQWVPRLKFFLPIRMRTLKAVNKATAFPVFPHKLKGQWELRLKSFLIMRMRTLKSANKATTVPVFLHKVKDQWVPRLKYFLPIRMRTLKDANKATAVPVFPHKLKG</sequence>
<organismHost>
    <name type="scientific">Homo sapiens</name>
    <name type="common">Human</name>
    <dbReference type="NCBI Taxonomy" id="9606"/>
</organismHost>
<organism>
    <name type="scientific">Human herpesvirus 6B (strain Z29)</name>
    <name type="common">HHV-6 variant B</name>
    <name type="synonym">Human B lymphotropic virus</name>
    <dbReference type="NCBI Taxonomy" id="36351"/>
    <lineage>
        <taxon>Viruses</taxon>
        <taxon>Duplodnaviria</taxon>
        <taxon>Heunggongvirae</taxon>
        <taxon>Peploviricota</taxon>
        <taxon>Herviviricetes</taxon>
        <taxon>Herpesvirales</taxon>
        <taxon>Orthoherpesviridae</taxon>
        <taxon>Betaherpesvirinae</taxon>
        <taxon>Roseolovirus</taxon>
        <taxon>Roseolovirus humanbeta6b</taxon>
        <taxon>Human herpesvirus 6B</taxon>
    </lineage>
</organism>
<accession>Q9QJ13</accession>
<dbReference type="EMBL" id="AF157706">
    <property type="protein sequence ID" value="AAD49677.1"/>
    <property type="molecule type" value="Genomic_DNA"/>
</dbReference>
<dbReference type="RefSeq" id="NP_050268.1">
    <property type="nucleotide sequence ID" value="NC_000898.1"/>
</dbReference>
<dbReference type="GeneID" id="1497089"/>
<dbReference type="KEGG" id="vg:1497089"/>
<dbReference type="Proteomes" id="UP000006930">
    <property type="component" value="Segment"/>
</dbReference>
<name>B8_HHV6Z</name>
<reference key="1">
    <citation type="journal article" date="1999" name="J. Virol.">
        <title>Human herpesvirus 6B genome sequence: coding content and comparison with human herpesvirus 6A.</title>
        <authorList>
            <person name="Dominguez G."/>
            <person name="Dambaugh T.R."/>
            <person name="Stamey F.R."/>
            <person name="Dewhurst S."/>
            <person name="Inoue N."/>
            <person name="Pellett P.E."/>
        </authorList>
    </citation>
    <scope>NUCLEOTIDE SEQUENCE [LARGE SCALE GENOMIC DNA]</scope>
</reference>
<proteinExistence type="predicted"/>
<protein>
    <recommendedName>
        <fullName>Protein B8</fullName>
    </recommendedName>
</protein>
<feature type="chain" id="PRO_0000408399" description="Protein B8">
    <location>
        <begin position="1"/>
        <end position="265"/>
    </location>
</feature>
<keyword id="KW-1185">Reference proteome</keyword>